<feature type="chain" id="PRO_0000105704" description="Nodulation protein D 1">
    <location>
        <begin position="1"/>
        <end position="321"/>
    </location>
</feature>
<feature type="domain" description="HTH lysR-type" evidence="1">
    <location>
        <begin position="6"/>
        <end position="63"/>
    </location>
</feature>
<feature type="DNA-binding region" description="H-T-H motif" evidence="1">
    <location>
        <begin position="23"/>
        <end position="42"/>
    </location>
</feature>
<accession>P12232</accession>
<proteinExistence type="inferred from homology"/>
<evidence type="ECO:0000255" key="1">
    <source>
        <dbReference type="PROSITE-ProRule" id="PRU00253"/>
    </source>
</evidence>
<evidence type="ECO:0000305" key="2"/>
<dbReference type="EMBL" id="M18971">
    <property type="protein sequence ID" value="AAA26334.1"/>
    <property type="molecule type" value="Genomic_DNA"/>
</dbReference>
<dbReference type="PIR" id="A28663">
    <property type="entry name" value="A28663"/>
</dbReference>
<dbReference type="SMR" id="P12232"/>
<dbReference type="GO" id="GO:0003677">
    <property type="term" value="F:DNA binding"/>
    <property type="evidence" value="ECO:0007669"/>
    <property type="project" value="UniProtKB-KW"/>
</dbReference>
<dbReference type="GO" id="GO:0003700">
    <property type="term" value="F:DNA-binding transcription factor activity"/>
    <property type="evidence" value="ECO:0007669"/>
    <property type="project" value="InterPro"/>
</dbReference>
<dbReference type="CDD" id="cd08462">
    <property type="entry name" value="PBP2_NodD"/>
    <property type="match status" value="1"/>
</dbReference>
<dbReference type="Gene3D" id="3.40.190.10">
    <property type="entry name" value="Periplasmic binding protein-like II"/>
    <property type="match status" value="2"/>
</dbReference>
<dbReference type="Gene3D" id="1.10.10.10">
    <property type="entry name" value="Winged helix-like DNA-binding domain superfamily/Winged helix DNA-binding domain"/>
    <property type="match status" value="1"/>
</dbReference>
<dbReference type="InterPro" id="IPR050389">
    <property type="entry name" value="LysR-type_TF"/>
</dbReference>
<dbReference type="InterPro" id="IPR005119">
    <property type="entry name" value="LysR_subst-bd"/>
</dbReference>
<dbReference type="InterPro" id="IPR037416">
    <property type="entry name" value="NodD_PBP2"/>
</dbReference>
<dbReference type="InterPro" id="IPR000847">
    <property type="entry name" value="Tscrpt_reg_HTH_LysR"/>
</dbReference>
<dbReference type="InterPro" id="IPR036388">
    <property type="entry name" value="WH-like_DNA-bd_sf"/>
</dbReference>
<dbReference type="InterPro" id="IPR036390">
    <property type="entry name" value="WH_DNA-bd_sf"/>
</dbReference>
<dbReference type="PANTHER" id="PTHR30118:SF6">
    <property type="entry name" value="HTH-TYPE TRANSCRIPTIONAL REGULATOR LEUO"/>
    <property type="match status" value="1"/>
</dbReference>
<dbReference type="PANTHER" id="PTHR30118">
    <property type="entry name" value="HTH-TYPE TRANSCRIPTIONAL REGULATOR LEUO-RELATED"/>
    <property type="match status" value="1"/>
</dbReference>
<dbReference type="Pfam" id="PF00126">
    <property type="entry name" value="HTH_1"/>
    <property type="match status" value="1"/>
</dbReference>
<dbReference type="Pfam" id="PF03466">
    <property type="entry name" value="LysR_substrate"/>
    <property type="match status" value="1"/>
</dbReference>
<dbReference type="PRINTS" id="PR00039">
    <property type="entry name" value="HTHLYSR"/>
</dbReference>
<dbReference type="SUPFAM" id="SSF53850">
    <property type="entry name" value="Periplasmic binding protein-like II"/>
    <property type="match status" value="1"/>
</dbReference>
<dbReference type="SUPFAM" id="SSF46785">
    <property type="entry name" value="Winged helix' DNA-binding domain"/>
    <property type="match status" value="1"/>
</dbReference>
<dbReference type="PROSITE" id="PS50931">
    <property type="entry name" value="HTH_LYSR"/>
    <property type="match status" value="1"/>
</dbReference>
<geneLocation type="plasmid">
    <name>sym</name>
</geneLocation>
<sequence>MRFKGLDLNLLVALDALMTERKLTAAARSINLSQPAMSAAITRLRTYFRDELFTMNGRELVPTPRAEALAPAVREALLHIHLSIISWDPFNPAQSDRSFRIILSDFMTLMFFERVVVRVAREAPAVSFELLPFSDEPDELLRRGDVDFLILPEMFMSHTHPRAKLFDERFVCVSCPTNQKLPPQLSIDNYVSMGHVAAQFGKQRPSVEEWLLREHGLRRRVEVAVPGFTMIPPFLSGTDRIATLPLRLAMHFAKAIPLRITELPQPIFPAFTEAVQWPAPHSSDPASLWMREIFLQEASRVEFQSETSAHALSSSQLPTCL</sequence>
<comment type="function">
    <text>NodD regulates the expression of the nodABCFE genes which encode other nodulation proteins. NodD is also a negative regulator of its own expression. Binds flavonoids as inducers.</text>
</comment>
<comment type="similarity">
    <text evidence="2">Belongs to the LysR transcriptional regulatory family.</text>
</comment>
<protein>
    <recommendedName>
        <fullName>Nodulation protein D 1</fullName>
    </recommendedName>
</protein>
<name>NODD1_BRAJP</name>
<keyword id="KW-0010">Activator</keyword>
<keyword id="KW-0238">DNA-binding</keyword>
<keyword id="KW-0536">Nodulation</keyword>
<keyword id="KW-0614">Plasmid</keyword>
<keyword id="KW-0678">Repressor</keyword>
<keyword id="KW-0804">Transcription</keyword>
<keyword id="KW-0805">Transcription regulation</keyword>
<reference key="1">
    <citation type="journal article" date="1988" name="J. Bacteriol.">
        <title>Rhizobium japonicum USDA 191 has two nodD genes that differ in primary structure and function.</title>
        <authorList>
            <person name="Appelbaum E.R."/>
            <person name="Thompson D.V."/>
            <person name="Idler K."/>
            <person name="Chartrain N."/>
        </authorList>
    </citation>
    <scope>NUCLEOTIDE SEQUENCE [GENOMIC DNA]</scope>
    <source>
        <strain>USDA 191</strain>
    </source>
</reference>
<gene>
    <name type="primary">nodD1</name>
</gene>
<organism>
    <name type="scientific">Bradyrhizobium japonicum</name>
    <dbReference type="NCBI Taxonomy" id="375"/>
    <lineage>
        <taxon>Bacteria</taxon>
        <taxon>Pseudomonadati</taxon>
        <taxon>Pseudomonadota</taxon>
        <taxon>Alphaproteobacteria</taxon>
        <taxon>Hyphomicrobiales</taxon>
        <taxon>Nitrobacteraceae</taxon>
        <taxon>Bradyrhizobium</taxon>
    </lineage>
</organism>